<feature type="chain" id="PRO_0000218385" description="Uncharacterized protein TC_0273">
    <location>
        <begin position="1"/>
        <end position="367"/>
    </location>
</feature>
<feature type="transmembrane region" description="Helical" evidence="1">
    <location>
        <begin position="35"/>
        <end position="55"/>
    </location>
</feature>
<feature type="transmembrane region" description="Helical" evidence="1">
    <location>
        <begin position="61"/>
        <end position="81"/>
    </location>
</feature>
<feature type="transmembrane region" description="Helical" evidence="1">
    <location>
        <begin position="92"/>
        <end position="112"/>
    </location>
</feature>
<feature type="transmembrane region" description="Helical" evidence="1">
    <location>
        <begin position="113"/>
        <end position="133"/>
    </location>
</feature>
<feature type="region of interest" description="Disordered" evidence="2">
    <location>
        <begin position="177"/>
        <end position="220"/>
    </location>
</feature>
<feature type="region of interest" description="Disordered" evidence="2">
    <location>
        <begin position="249"/>
        <end position="283"/>
    </location>
</feature>
<feature type="region of interest" description="Disordered" evidence="2">
    <location>
        <begin position="296"/>
        <end position="367"/>
    </location>
</feature>
<feature type="compositionally biased region" description="Polar residues" evidence="2">
    <location>
        <begin position="257"/>
        <end position="274"/>
    </location>
</feature>
<feature type="compositionally biased region" description="Low complexity" evidence="2">
    <location>
        <begin position="302"/>
        <end position="312"/>
    </location>
</feature>
<feature type="compositionally biased region" description="Basic and acidic residues" evidence="2">
    <location>
        <begin position="323"/>
        <end position="342"/>
    </location>
</feature>
<feature type="compositionally biased region" description="Basic residues" evidence="2">
    <location>
        <begin position="357"/>
        <end position="367"/>
    </location>
</feature>
<dbReference type="EMBL" id="AE002160">
    <property type="protein sequence ID" value="AAF39141.1"/>
    <property type="molecule type" value="Genomic_DNA"/>
</dbReference>
<dbReference type="PIR" id="C81722">
    <property type="entry name" value="C81722"/>
</dbReference>
<dbReference type="SMR" id="Q9PL35"/>
<dbReference type="KEGG" id="cmu:TC_0273"/>
<dbReference type="HOGENOM" id="CLU_762269_0_0_0"/>
<dbReference type="Proteomes" id="UP000000800">
    <property type="component" value="Chromosome"/>
</dbReference>
<dbReference type="GO" id="GO:0005886">
    <property type="term" value="C:plasma membrane"/>
    <property type="evidence" value="ECO:0007669"/>
    <property type="project" value="UniProtKB-SubCell"/>
</dbReference>
<dbReference type="InterPro" id="IPR035355">
    <property type="entry name" value="DUF5423"/>
</dbReference>
<dbReference type="Pfam" id="PF17461">
    <property type="entry name" value="DUF5423"/>
    <property type="match status" value="1"/>
</dbReference>
<comment type="subcellular location">
    <subcellularLocation>
        <location evidence="3">Cell membrane</location>
        <topology evidence="3">Multi-pass membrane protein</topology>
    </subcellularLocation>
</comment>
<comment type="similarity">
    <text evidence="3">Belongs to the chlamydial CPn_0443/CT_005/TC_0273 family.</text>
</comment>
<gene>
    <name type="ordered locus">TC_0273</name>
</gene>
<reference key="1">
    <citation type="journal article" date="2000" name="Nucleic Acids Res.">
        <title>Genome sequences of Chlamydia trachomatis MoPn and Chlamydia pneumoniae AR39.</title>
        <authorList>
            <person name="Read T.D."/>
            <person name="Brunham R.C."/>
            <person name="Shen C."/>
            <person name="Gill S.R."/>
            <person name="Heidelberg J.F."/>
            <person name="White O."/>
            <person name="Hickey E.K."/>
            <person name="Peterson J.D."/>
            <person name="Utterback T.R."/>
            <person name="Berry K.J."/>
            <person name="Bass S."/>
            <person name="Linher K.D."/>
            <person name="Weidman J.F."/>
            <person name="Khouri H.M."/>
            <person name="Craven B."/>
            <person name="Bowman C."/>
            <person name="Dodson R.J."/>
            <person name="Gwinn M.L."/>
            <person name="Nelson W.C."/>
            <person name="DeBoy R.T."/>
            <person name="Kolonay J.F."/>
            <person name="McClarty G."/>
            <person name="Salzberg S.L."/>
            <person name="Eisen J.A."/>
            <person name="Fraser C.M."/>
        </authorList>
    </citation>
    <scope>NUCLEOTIDE SEQUENCE [LARGE SCALE GENOMIC DNA]</scope>
    <source>
        <strain>MoPn / Nigg</strain>
    </source>
</reference>
<organism>
    <name type="scientific">Chlamydia muridarum (strain MoPn / Nigg)</name>
    <dbReference type="NCBI Taxonomy" id="243161"/>
    <lineage>
        <taxon>Bacteria</taxon>
        <taxon>Pseudomonadati</taxon>
        <taxon>Chlamydiota</taxon>
        <taxon>Chlamydiia</taxon>
        <taxon>Chlamydiales</taxon>
        <taxon>Chlamydiaceae</taxon>
        <taxon>Chlamydia/Chlamydophila group</taxon>
        <taxon>Chlamydia</taxon>
    </lineage>
</organism>
<proteinExistence type="inferred from homology"/>
<keyword id="KW-1003">Cell membrane</keyword>
<keyword id="KW-0472">Membrane</keyword>
<keyword id="KW-0812">Transmembrane</keyword>
<keyword id="KW-1133">Transmembrane helix</keyword>
<sequence>MVKIMAPITPTTSPQVKGLLSRFLTAPDRHPKLRYVYDISLIAISILCIVSIILWTQGSGLALFAIAPALAIGALGVTLLVSDLAESPKSKEVADTVAAVSLPFILTGTAAGLMFSAIAVGGGAVILANPLFLMGSMTLGFALMSLHKVTYQYLSNRSQWQKQNKIKQIESAAWENKLPKESKESSLQTSVRYSSLARKDKTRRNKPGMPNKGSQVPASIANTERSLRSEEVLHSQSLLRQKELFPNTSNIKKELPNTKSILHTPLNRRSPSGSDSDDVYYTPRAGLSSAETSALGDISGISSSSTSSKTSTPKAKRRVVRSSRSERNARHHRNKEDHRQNQEESSDDEDSSPLPSPRRKKYRSRPK</sequence>
<name>Y273_CHLMU</name>
<evidence type="ECO:0000255" key="1"/>
<evidence type="ECO:0000256" key="2">
    <source>
        <dbReference type="SAM" id="MobiDB-lite"/>
    </source>
</evidence>
<evidence type="ECO:0000305" key="3"/>
<accession>Q9PL35</accession>
<protein>
    <recommendedName>
        <fullName>Uncharacterized protein TC_0273</fullName>
    </recommendedName>
</protein>